<organism>
    <name type="scientific">Homo sapiens</name>
    <name type="common">Human</name>
    <dbReference type="NCBI Taxonomy" id="9606"/>
    <lineage>
        <taxon>Eukaryota</taxon>
        <taxon>Metazoa</taxon>
        <taxon>Chordata</taxon>
        <taxon>Craniata</taxon>
        <taxon>Vertebrata</taxon>
        <taxon>Euteleostomi</taxon>
        <taxon>Mammalia</taxon>
        <taxon>Eutheria</taxon>
        <taxon>Euarchontoglires</taxon>
        <taxon>Primates</taxon>
        <taxon>Haplorrhini</taxon>
        <taxon>Catarrhini</taxon>
        <taxon>Hominidae</taxon>
        <taxon>Homo</taxon>
    </lineage>
</organism>
<reference key="1">
    <citation type="journal article" date="2000" name="Blood">
        <title>FGFR1 is fused to the centrosome-associated protein CEP110 in the 8p12 stem cell myeloproliferative disorder with t(8;9)(p12;q33).</title>
        <authorList>
            <person name="Guasch G."/>
            <person name="Mack G.J."/>
            <person name="Popovici C."/>
            <person name="Dastugue N."/>
            <person name="Birnbaum D."/>
            <person name="Rattner J.B."/>
            <person name="Pebusque M.-J."/>
        </authorList>
    </citation>
    <scope>NUCLEOTIDE SEQUENCE [MRNA] (ISOFORM 3)</scope>
    <scope>TISSUE SPECIFICITY</scope>
    <scope>CHROMOSOMAL TRANSLOCATION WITH FGFR1</scope>
    <scope>SUBCELLULAR LOCATION</scope>
</reference>
<reference key="2">
    <citation type="journal article" date="2003" name="J. Cell Biol.">
        <title>A novel human protein of the maternal centriole is required for the final stages of cytokinesis and entry into S phase.</title>
        <authorList>
            <person name="Gromley A."/>
            <person name="Jurczyk A."/>
            <person name="Sillibourne J."/>
            <person name="Halilovic E."/>
            <person name="Mogensen M."/>
            <person name="Groisman I."/>
            <person name="Blomberg M."/>
            <person name="Doxsey S.J."/>
        </authorList>
    </citation>
    <scope>NUCLEOTIDE SEQUENCE [MRNA] (ISOFORM 1)</scope>
    <scope>VARIANT ILE-56</scope>
    <scope>SUBCELLULAR LOCATION</scope>
    <scope>FUNCTION</scope>
</reference>
<reference key="3">
    <citation type="journal article" date="2007" name="BMC Genomics">
        <title>The full-ORF clone resource of the German cDNA consortium.</title>
        <authorList>
            <person name="Bechtel S."/>
            <person name="Rosenfelder H."/>
            <person name="Duda A."/>
            <person name="Schmidt C.P."/>
            <person name="Ernst U."/>
            <person name="Wellenreuther R."/>
            <person name="Mehrle A."/>
            <person name="Schuster C."/>
            <person name="Bahr A."/>
            <person name="Bloecker H."/>
            <person name="Heubner D."/>
            <person name="Hoerlein A."/>
            <person name="Michel G."/>
            <person name="Wedler H."/>
            <person name="Koehrer K."/>
            <person name="Ottenwaelder B."/>
            <person name="Poustka A."/>
            <person name="Wiemann S."/>
            <person name="Schupp I."/>
        </authorList>
    </citation>
    <scope>NUCLEOTIDE SEQUENCE [LARGE SCALE MRNA] (ISOFORM 4)</scope>
    <source>
        <tissue>Liver</tissue>
    </source>
</reference>
<reference key="4">
    <citation type="journal article" date="2004" name="Nature">
        <title>DNA sequence and analysis of human chromosome 9.</title>
        <authorList>
            <person name="Humphray S.J."/>
            <person name="Oliver K."/>
            <person name="Hunt A.R."/>
            <person name="Plumb R.W."/>
            <person name="Loveland J.E."/>
            <person name="Howe K.L."/>
            <person name="Andrews T.D."/>
            <person name="Searle S."/>
            <person name="Hunt S.E."/>
            <person name="Scott C.E."/>
            <person name="Jones M.C."/>
            <person name="Ainscough R."/>
            <person name="Almeida J.P."/>
            <person name="Ambrose K.D."/>
            <person name="Ashwell R.I.S."/>
            <person name="Babbage A.K."/>
            <person name="Babbage S."/>
            <person name="Bagguley C.L."/>
            <person name="Bailey J."/>
            <person name="Banerjee R."/>
            <person name="Barker D.J."/>
            <person name="Barlow K.F."/>
            <person name="Bates K."/>
            <person name="Beasley H."/>
            <person name="Beasley O."/>
            <person name="Bird C.P."/>
            <person name="Bray-Allen S."/>
            <person name="Brown A.J."/>
            <person name="Brown J.Y."/>
            <person name="Burford D."/>
            <person name="Burrill W."/>
            <person name="Burton J."/>
            <person name="Carder C."/>
            <person name="Carter N.P."/>
            <person name="Chapman J.C."/>
            <person name="Chen Y."/>
            <person name="Clarke G."/>
            <person name="Clark S.Y."/>
            <person name="Clee C.M."/>
            <person name="Clegg S."/>
            <person name="Collier R.E."/>
            <person name="Corby N."/>
            <person name="Crosier M."/>
            <person name="Cummings A.T."/>
            <person name="Davies J."/>
            <person name="Dhami P."/>
            <person name="Dunn M."/>
            <person name="Dutta I."/>
            <person name="Dyer L.W."/>
            <person name="Earthrowl M.E."/>
            <person name="Faulkner L."/>
            <person name="Fleming C.J."/>
            <person name="Frankish A."/>
            <person name="Frankland J.A."/>
            <person name="French L."/>
            <person name="Fricker D.G."/>
            <person name="Garner P."/>
            <person name="Garnett J."/>
            <person name="Ghori J."/>
            <person name="Gilbert J.G.R."/>
            <person name="Glison C."/>
            <person name="Grafham D.V."/>
            <person name="Gribble S."/>
            <person name="Griffiths C."/>
            <person name="Griffiths-Jones S."/>
            <person name="Grocock R."/>
            <person name="Guy J."/>
            <person name="Hall R.E."/>
            <person name="Hammond S."/>
            <person name="Harley J.L."/>
            <person name="Harrison E.S.I."/>
            <person name="Hart E.A."/>
            <person name="Heath P.D."/>
            <person name="Henderson C.D."/>
            <person name="Hopkins B.L."/>
            <person name="Howard P.J."/>
            <person name="Howden P.J."/>
            <person name="Huckle E."/>
            <person name="Johnson C."/>
            <person name="Johnson D."/>
            <person name="Joy A.A."/>
            <person name="Kay M."/>
            <person name="Keenan S."/>
            <person name="Kershaw J.K."/>
            <person name="Kimberley A.M."/>
            <person name="King A."/>
            <person name="Knights A."/>
            <person name="Laird G.K."/>
            <person name="Langford C."/>
            <person name="Lawlor S."/>
            <person name="Leongamornlert D.A."/>
            <person name="Leversha M."/>
            <person name="Lloyd C."/>
            <person name="Lloyd D.M."/>
            <person name="Lovell J."/>
            <person name="Martin S."/>
            <person name="Mashreghi-Mohammadi M."/>
            <person name="Matthews L."/>
            <person name="McLaren S."/>
            <person name="McLay K.E."/>
            <person name="McMurray A."/>
            <person name="Milne S."/>
            <person name="Nickerson T."/>
            <person name="Nisbett J."/>
            <person name="Nordsiek G."/>
            <person name="Pearce A.V."/>
            <person name="Peck A.I."/>
            <person name="Porter K.M."/>
            <person name="Pandian R."/>
            <person name="Pelan S."/>
            <person name="Phillimore B."/>
            <person name="Povey S."/>
            <person name="Ramsey Y."/>
            <person name="Rand V."/>
            <person name="Scharfe M."/>
            <person name="Sehra H.K."/>
            <person name="Shownkeen R."/>
            <person name="Sims S.K."/>
            <person name="Skuce C.D."/>
            <person name="Smith M."/>
            <person name="Steward C.A."/>
            <person name="Swarbreck D."/>
            <person name="Sycamore N."/>
            <person name="Tester J."/>
            <person name="Thorpe A."/>
            <person name="Tracey A."/>
            <person name="Tromans A."/>
            <person name="Thomas D.W."/>
            <person name="Wall M."/>
            <person name="Wallis J.M."/>
            <person name="West A.P."/>
            <person name="Whitehead S.L."/>
            <person name="Willey D.L."/>
            <person name="Williams S.A."/>
            <person name="Wilming L."/>
            <person name="Wray P.W."/>
            <person name="Young L."/>
            <person name="Ashurst J.L."/>
            <person name="Coulson A."/>
            <person name="Blocker H."/>
            <person name="Durbin R.M."/>
            <person name="Sulston J.E."/>
            <person name="Hubbard T."/>
            <person name="Jackson M.J."/>
            <person name="Bentley D.R."/>
            <person name="Beck S."/>
            <person name="Rogers J."/>
            <person name="Dunham I."/>
        </authorList>
    </citation>
    <scope>NUCLEOTIDE SEQUENCE [LARGE SCALE GENOMIC DNA]</scope>
</reference>
<reference key="5">
    <citation type="journal article" date="2004" name="Genome Res.">
        <title>The status, quality, and expansion of the NIH full-length cDNA project: the Mammalian Gene Collection (MGC).</title>
        <authorList>
            <consortium name="The MGC Project Team"/>
        </authorList>
    </citation>
    <scope>NUCLEOTIDE SEQUENCE [LARGE SCALE MRNA] OF 1-1513 (ISOFORM 2)</scope>
    <source>
        <tissue>Lymph</tissue>
        <tissue>Placenta</tissue>
    </source>
</reference>
<reference key="6">
    <citation type="journal article" date="2005" name="Biochem. Biophys. Res. Commun.">
        <title>Humoral detection of leukaemia-associated antigens in presentation acute myeloid leukaemia.</title>
        <authorList>
            <person name="Guinn B.-A."/>
            <person name="Bland E.A."/>
            <person name="Lodi U."/>
            <person name="Liggins A.P."/>
            <person name="Tobal K."/>
            <person name="Petters S."/>
            <person name="Wells J.W."/>
            <person name="Banham A.H."/>
            <person name="Mufti G.J."/>
        </authorList>
    </citation>
    <scope>NUCLEOTIDE SEQUENCE [MRNA] OF 434-1677 (ISOFORM 1)</scope>
</reference>
<reference key="7">
    <citation type="journal article" date="2003" name="DNA Res.">
        <title>Characterization of long cDNA clones from human adult spleen. II. The complete sequences of 81 cDNA clones.</title>
        <authorList>
            <person name="Jikuya H."/>
            <person name="Takano J."/>
            <person name="Kikuno R."/>
            <person name="Hirosawa M."/>
            <person name="Nagase T."/>
            <person name="Nomura N."/>
            <person name="Ohara O."/>
        </authorList>
    </citation>
    <scope>NUCLEOTIDE SEQUENCE [LARGE SCALE MRNA] OF 527-2325 (ISOFORM 5)</scope>
    <source>
        <tissue>Spleen</tissue>
    </source>
</reference>
<reference key="8">
    <citation type="journal article" date="2002" name="J. Cell Sci.">
        <title>CEP110 and ninein are located in a specific domain of the centrosome associated with centrosome maturation.</title>
        <authorList>
            <person name="Ou Y.Y."/>
            <person name="Mack G.J."/>
            <person name="Zhang M."/>
            <person name="Rattner J.B."/>
        </authorList>
    </citation>
    <scope>SUBCELLULAR LOCATION</scope>
</reference>
<reference key="9">
    <citation type="journal article" date="2003" name="Nature">
        <title>Proteomic characterization of the human centrosome by protein correlation profiling.</title>
        <authorList>
            <person name="Andersen J.S."/>
            <person name="Wilkinson C.J."/>
            <person name="Mayor T."/>
            <person name="Mortensen P."/>
            <person name="Nigg E.A."/>
            <person name="Mann M."/>
        </authorList>
    </citation>
    <scope>IDENTIFICATION BY MASS SPECTROMETRY</scope>
    <scope>SUBCELLULAR LOCATION [LARGE SCALE ANALYSIS]</scope>
    <source>
        <tissue>Lymphoblast</tissue>
    </source>
</reference>
<reference key="10">
    <citation type="journal article" date="2005" name="Cell">
        <title>Centriolin anchoring of exocyst and SNARE complexes at the midbody is required for secretory-vesicle-mediated abscission.</title>
        <authorList>
            <person name="Gromley A."/>
            <person name="Yeaman C."/>
            <person name="Rosa J."/>
            <person name="Redick S."/>
            <person name="Chen C.-T."/>
            <person name="Mirabelle S."/>
            <person name="Guha M."/>
            <person name="Sillibourne J."/>
            <person name="Doxsey S.J."/>
        </authorList>
    </citation>
    <scope>FUNCTION</scope>
    <scope>INTERACTION WITH EXOC6 AND SNAPIN</scope>
    <scope>SUBCELLULAR LOCATION</scope>
</reference>
<reference key="11">
    <citation type="journal article" date="2007" name="Traffic">
        <title>Hook2 localizes to the centrosome, binds directly to centriolin/CEP110 and contributes to centrosomal function.</title>
        <authorList>
            <person name="Szebenyi G."/>
            <person name="Hall B."/>
            <person name="Yu R."/>
            <person name="Hashim A.I."/>
            <person name="Kraemer H."/>
        </authorList>
    </citation>
    <scope>INTERACTION WITH HOOK2</scope>
</reference>
<reference key="12">
    <citation type="journal article" date="2013" name="J. Proteome Res.">
        <title>Toward a comprehensive characterization of a human cancer cell phosphoproteome.</title>
        <authorList>
            <person name="Zhou H."/>
            <person name="Di Palma S."/>
            <person name="Preisinger C."/>
            <person name="Peng M."/>
            <person name="Polat A.N."/>
            <person name="Heck A.J."/>
            <person name="Mohammed S."/>
        </authorList>
    </citation>
    <scope>PHOSPHORYLATION [LARGE SCALE ANALYSIS] AT SER-831 AND SER-1475</scope>
    <scope>IDENTIFICATION BY MASS SPECTROMETRY [LARGE SCALE ANALYSIS]</scope>
    <source>
        <tissue>Erythroleukemia</tissue>
    </source>
</reference>
<feature type="chain" id="PRO_0000323675" description="Centriolin">
    <location>
        <begin position="1"/>
        <end position="2325"/>
    </location>
</feature>
<feature type="repeat" description="LRR 1">
    <location>
        <begin position="126"/>
        <end position="147"/>
    </location>
</feature>
<feature type="repeat" description="LRR 2">
    <location>
        <begin position="148"/>
        <end position="169"/>
    </location>
</feature>
<feature type="repeat" description="LRR 3">
    <location>
        <begin position="170"/>
        <end position="191"/>
    </location>
</feature>
<feature type="repeat" description="LRR 4">
    <location>
        <begin position="194"/>
        <end position="215"/>
    </location>
</feature>
<feature type="domain" description="LRRCT">
    <location>
        <begin position="228"/>
        <end position="266"/>
    </location>
</feature>
<feature type="region of interest" description="Disordered" evidence="2">
    <location>
        <begin position="1"/>
        <end position="33"/>
    </location>
</feature>
<feature type="region of interest" description="Disordered" evidence="2">
    <location>
        <begin position="1150"/>
        <end position="1241"/>
    </location>
</feature>
<feature type="region of interest" description="Required for centrosome localization">
    <location>
        <begin position="1948"/>
        <end position="2118"/>
    </location>
</feature>
<feature type="region of interest" description="Sufficient for interaction with HOOK2" evidence="8">
    <location>
        <begin position="1985"/>
        <end position="2325"/>
    </location>
</feature>
<feature type="region of interest" description="Disordered" evidence="2">
    <location>
        <begin position="2288"/>
        <end position="2325"/>
    </location>
</feature>
<feature type="coiled-coil region" evidence="1">
    <location>
        <begin position="267"/>
        <end position="343"/>
    </location>
</feature>
<feature type="coiled-coil region" evidence="1">
    <location>
        <begin position="435"/>
        <end position="799"/>
    </location>
</feature>
<feature type="coiled-coil region" evidence="1">
    <location>
        <begin position="851"/>
        <end position="1101"/>
    </location>
</feature>
<feature type="coiled-coil region" evidence="1">
    <location>
        <begin position="1317"/>
        <end position="2255"/>
    </location>
</feature>
<feature type="compositionally biased region" description="Low complexity" evidence="2">
    <location>
        <begin position="16"/>
        <end position="33"/>
    </location>
</feature>
<feature type="compositionally biased region" description="Acidic residues" evidence="2">
    <location>
        <begin position="1224"/>
        <end position="1235"/>
    </location>
</feature>
<feature type="compositionally biased region" description="Low complexity" evidence="2">
    <location>
        <begin position="2290"/>
        <end position="2314"/>
    </location>
</feature>
<feature type="compositionally biased region" description="Polar residues" evidence="2">
    <location>
        <begin position="2315"/>
        <end position="2325"/>
    </location>
</feature>
<feature type="site" description="Breakpoint for translocation to form CEP110-FGFR1">
    <location>
        <begin position="2139"/>
        <end position="2140"/>
    </location>
</feature>
<feature type="modified residue" description="Phosphoserine" evidence="14">
    <location>
        <position position="831"/>
    </location>
</feature>
<feature type="modified residue" description="Phosphoserine" evidence="14">
    <location>
        <position position="1475"/>
    </location>
</feature>
<feature type="splice variant" id="VSP_032046" description="In isoform 4." evidence="12">
    <location>
        <begin position="1"/>
        <end position="1818"/>
    </location>
</feature>
<feature type="splice variant" id="VSP_032047" description="In isoform 3." evidence="9">
    <location>
        <begin position="1"/>
        <end position="1331"/>
    </location>
</feature>
<feature type="splice variant" id="VSP_032048" description="In isoform 2." evidence="11">
    <location>
        <begin position="1"/>
        <end position="552"/>
    </location>
</feature>
<feature type="splice variant" id="VSP_032049" description="In isoform 5." evidence="10">
    <location>
        <begin position="1291"/>
        <end position="1296"/>
    </location>
</feature>
<feature type="splice variant" id="VSP_032050" description="In isoform 4." evidence="12">
    <location>
        <begin position="1962"/>
        <end position="1986"/>
    </location>
</feature>
<feature type="sequence variant" id="VAR_039559" description="In dbSNP:rs10818503." evidence="5">
    <original>V</original>
    <variation>I</variation>
    <location>
        <position position="56"/>
    </location>
</feature>
<feature type="sequence variant" id="VAR_039560" description="In dbSNP:rs10818504.">
    <original>P</original>
    <variation>L</variation>
    <location>
        <position position="216"/>
    </location>
</feature>
<feature type="sequence variant" id="VAR_039561" description="In dbSNP:rs17292952.">
    <original>A</original>
    <variation>T</variation>
    <location>
        <position position="889"/>
    </location>
</feature>
<feature type="sequence variant" id="VAR_061622" description="In dbSNP:rs35342437.">
    <original>M</original>
    <variation>V</variation>
    <location>
        <position position="1146"/>
    </location>
</feature>
<feature type="sequence conflict" description="In Ref. 1; AAC32373." evidence="13" ref="1">
    <original>Q</original>
    <variation>R</variation>
    <location>
        <position position="1389"/>
    </location>
</feature>
<feature type="sequence conflict" description="In Ref. 1; AAC32373." evidence="13" ref="1">
    <original>K</original>
    <variation>Q</variation>
    <location>
        <position position="1699"/>
    </location>
</feature>
<feature type="sequence conflict" description="In Ref. 1; AAC32373." evidence="13" ref="1">
    <original>E</original>
    <variation>D</variation>
    <location>
        <position position="1828"/>
    </location>
</feature>
<protein>
    <recommendedName>
        <fullName>Centriolin</fullName>
    </recommendedName>
    <alternativeName>
        <fullName>Centrosomal protein 1</fullName>
    </alternativeName>
    <alternativeName>
        <fullName>Centrosomal protein of 110 kDa</fullName>
        <shortName>Cep110</shortName>
    </alternativeName>
</protein>
<name>CNTRL_HUMAN</name>
<dbReference type="EMBL" id="AF083322">
    <property type="protein sequence ID" value="AAC32373.1"/>
    <property type="molecule type" value="mRNA"/>
</dbReference>
<dbReference type="EMBL" id="AF513978">
    <property type="protein sequence ID" value="AAP43846.1"/>
    <property type="molecule type" value="mRNA"/>
</dbReference>
<dbReference type="EMBL" id="BX640927">
    <property type="protein sequence ID" value="CAE45965.1"/>
    <property type="molecule type" value="mRNA"/>
</dbReference>
<dbReference type="EMBL" id="AL137068">
    <property type="status" value="NOT_ANNOTATED_CDS"/>
    <property type="molecule type" value="Genomic_DNA"/>
</dbReference>
<dbReference type="EMBL" id="BC002932">
    <property type="protein sequence ID" value="AAH02932.1"/>
    <property type="status" value="ALT_SEQ"/>
    <property type="molecule type" value="mRNA"/>
</dbReference>
<dbReference type="EMBL" id="BC089415">
    <property type="protein sequence ID" value="AAH89415.1"/>
    <property type="status" value="ALT_SEQ"/>
    <property type="molecule type" value="mRNA"/>
</dbReference>
<dbReference type="EMBL" id="BC137286">
    <property type="protein sequence ID" value="AAI37287.1"/>
    <property type="molecule type" value="mRNA"/>
</dbReference>
<dbReference type="EMBL" id="AY651261">
    <property type="protein sequence ID" value="AAX35689.1"/>
    <property type="molecule type" value="mRNA"/>
</dbReference>
<dbReference type="EMBL" id="AK074079">
    <property type="protein sequence ID" value="BAB84905.1"/>
    <property type="molecule type" value="mRNA"/>
</dbReference>
<dbReference type="CCDS" id="CCDS35118.1">
    <molecule id="Q7Z7A1-1"/>
</dbReference>
<dbReference type="CCDS" id="CCDS83409.1">
    <molecule id="Q7Z7A1-2"/>
</dbReference>
<dbReference type="RefSeq" id="NP_001317691.1">
    <molecule id="Q7Z7A1-2"/>
    <property type="nucleotide sequence ID" value="NM_001330762.2"/>
</dbReference>
<dbReference type="RefSeq" id="NP_008949.4">
    <molecule id="Q7Z7A1-1"/>
    <property type="nucleotide sequence ID" value="NM_007018.4"/>
</dbReference>
<dbReference type="RefSeq" id="XP_005251736.1">
    <property type="nucleotide sequence ID" value="XM_005251679.3"/>
</dbReference>
<dbReference type="RefSeq" id="XP_047278638.1">
    <molecule id="Q7Z7A1-1"/>
    <property type="nucleotide sequence ID" value="XM_047422682.1"/>
</dbReference>
<dbReference type="RefSeq" id="XP_054217812.1">
    <molecule id="Q7Z7A1-1"/>
    <property type="nucleotide sequence ID" value="XM_054361837.1"/>
</dbReference>
<dbReference type="SMR" id="Q7Z7A1"/>
<dbReference type="BioGRID" id="116248">
    <property type="interactions" value="195"/>
</dbReference>
<dbReference type="CORUM" id="Q7Z7A1"/>
<dbReference type="DIP" id="DIP-47280N"/>
<dbReference type="FunCoup" id="Q7Z7A1">
    <property type="interactions" value="1267"/>
</dbReference>
<dbReference type="IntAct" id="Q7Z7A1">
    <property type="interactions" value="194"/>
</dbReference>
<dbReference type="MINT" id="Q7Z7A1"/>
<dbReference type="STRING" id="9606.ENSP00000362962"/>
<dbReference type="CarbonylDB" id="Q7Z7A1"/>
<dbReference type="GlyGen" id="Q7Z7A1">
    <property type="glycosylation" value="1 site, 1 O-linked glycan (1 site)"/>
</dbReference>
<dbReference type="iPTMnet" id="Q7Z7A1"/>
<dbReference type="PhosphoSitePlus" id="Q7Z7A1"/>
<dbReference type="BioMuta" id="CNTRL"/>
<dbReference type="DMDM" id="172045911"/>
<dbReference type="jPOST" id="Q7Z7A1"/>
<dbReference type="MassIVE" id="Q7Z7A1"/>
<dbReference type="PaxDb" id="9606-ENSP00000362962"/>
<dbReference type="PeptideAtlas" id="Q7Z7A1"/>
<dbReference type="ProteomicsDB" id="69493">
    <molecule id="Q7Z7A1-1"/>
</dbReference>
<dbReference type="ProteomicsDB" id="69494">
    <molecule id="Q7Z7A1-2"/>
</dbReference>
<dbReference type="ProteomicsDB" id="69495">
    <molecule id="Q7Z7A1-3"/>
</dbReference>
<dbReference type="ProteomicsDB" id="69496">
    <molecule id="Q7Z7A1-4"/>
</dbReference>
<dbReference type="ProteomicsDB" id="69497">
    <molecule id="Q7Z7A1-5"/>
</dbReference>
<dbReference type="Antibodypedia" id="30137">
    <property type="antibodies" value="35 antibodies from 13 providers"/>
</dbReference>
<dbReference type="DNASU" id="11064"/>
<dbReference type="Ensembl" id="ENST00000373850.6">
    <molecule id="Q7Z7A1-2"/>
    <property type="protein sequence ID" value="ENSP00000362956.1"/>
    <property type="gene ID" value="ENSG00000119397.19"/>
</dbReference>
<dbReference type="Ensembl" id="ENST00000373855.7">
    <molecule id="Q7Z7A1-1"/>
    <property type="protein sequence ID" value="ENSP00000362962.1"/>
    <property type="gene ID" value="ENSG00000119397.19"/>
</dbReference>
<dbReference type="GeneID" id="11064"/>
<dbReference type="KEGG" id="hsa:11064"/>
<dbReference type="MANE-Select" id="ENST00000373855.7">
    <property type="protein sequence ID" value="ENSP00000362962.1"/>
    <property type="RefSeq nucleotide sequence ID" value="NM_007018.6"/>
    <property type="RefSeq protein sequence ID" value="NP_008949.4"/>
</dbReference>
<dbReference type="UCSC" id="uc004bkx.1">
    <molecule id="Q7Z7A1-1"/>
    <property type="organism name" value="human"/>
</dbReference>
<dbReference type="AGR" id="HGNC:1858"/>
<dbReference type="CTD" id="11064"/>
<dbReference type="DisGeNET" id="11064"/>
<dbReference type="GeneCards" id="CNTRL"/>
<dbReference type="HGNC" id="HGNC:1858">
    <property type="gene designation" value="CNTRL"/>
</dbReference>
<dbReference type="HPA" id="ENSG00000119397">
    <property type="expression patterns" value="Tissue enhanced (lymphoid tissue, testis)"/>
</dbReference>
<dbReference type="MIM" id="605496">
    <property type="type" value="gene"/>
</dbReference>
<dbReference type="neXtProt" id="NX_Q7Z7A1"/>
<dbReference type="OpenTargets" id="ENSG00000119397"/>
<dbReference type="PharmGKB" id="PA26414"/>
<dbReference type="VEuPathDB" id="HostDB:ENSG00000119397"/>
<dbReference type="eggNOG" id="KOG0531">
    <property type="taxonomic scope" value="Eukaryota"/>
</dbReference>
<dbReference type="GeneTree" id="ENSGT00940000155434"/>
<dbReference type="HOGENOM" id="CLU_231608_0_0_1"/>
<dbReference type="InParanoid" id="Q7Z7A1"/>
<dbReference type="OMA" id="XYIENLE"/>
<dbReference type="OrthoDB" id="433501at2759"/>
<dbReference type="PAN-GO" id="Q7Z7A1">
    <property type="GO annotations" value="1 GO annotation based on evolutionary models"/>
</dbReference>
<dbReference type="PhylomeDB" id="Q7Z7A1"/>
<dbReference type="TreeFam" id="TF101135"/>
<dbReference type="PathwayCommons" id="Q7Z7A1"/>
<dbReference type="Reactome" id="R-HSA-1839117">
    <molecule id="Q7Z7A1-3"/>
    <property type="pathway name" value="Signaling by cytosolic FGFR1 fusion mutants"/>
</dbReference>
<dbReference type="Reactome" id="R-HSA-2565942">
    <property type="pathway name" value="Regulation of PLK1 Activity at G2/M Transition"/>
</dbReference>
<dbReference type="Reactome" id="R-HSA-380259">
    <property type="pathway name" value="Loss of Nlp from mitotic centrosomes"/>
</dbReference>
<dbReference type="Reactome" id="R-HSA-380270">
    <property type="pathway name" value="Recruitment of mitotic centrosome proteins and complexes"/>
</dbReference>
<dbReference type="Reactome" id="R-HSA-380284">
    <property type="pathway name" value="Loss of proteins required for interphase microtubule organization from the centrosome"/>
</dbReference>
<dbReference type="Reactome" id="R-HSA-380320">
    <property type="pathway name" value="Recruitment of NuMA to mitotic centrosomes"/>
</dbReference>
<dbReference type="Reactome" id="R-HSA-5620912">
    <property type="pathway name" value="Anchoring of the basal body to the plasma membrane"/>
</dbReference>
<dbReference type="Reactome" id="R-HSA-5655302">
    <molecule id="Q7Z7A1-3"/>
    <property type="pathway name" value="Signaling by FGFR1 in disease"/>
</dbReference>
<dbReference type="Reactome" id="R-HSA-8854518">
    <property type="pathway name" value="AURKA Activation by TPX2"/>
</dbReference>
<dbReference type="SignaLink" id="Q7Z7A1"/>
<dbReference type="SIGNOR" id="Q7Z7A1"/>
<dbReference type="BioGRID-ORCS" id="11064">
    <property type="hits" value="15 hits in 1166 CRISPR screens"/>
</dbReference>
<dbReference type="CD-CODE" id="8C2F96ED">
    <property type="entry name" value="Centrosome"/>
</dbReference>
<dbReference type="ChiTaRS" id="CNTRL">
    <property type="organism name" value="human"/>
</dbReference>
<dbReference type="GeneWiki" id="CNTRL"/>
<dbReference type="GenomeRNAi" id="11064"/>
<dbReference type="Pharos" id="Q7Z7A1">
    <property type="development level" value="Tbio"/>
</dbReference>
<dbReference type="PRO" id="PR:Q7Z7A1"/>
<dbReference type="Proteomes" id="UP000005640">
    <property type="component" value="Chromosome 9"/>
</dbReference>
<dbReference type="RNAct" id="Q7Z7A1">
    <property type="molecule type" value="protein"/>
</dbReference>
<dbReference type="Bgee" id="ENSG00000119397">
    <property type="expression patterns" value="Expressed in calcaneal tendon and 169 other cell types or tissues"/>
</dbReference>
<dbReference type="ExpressionAtlas" id="Q7Z7A1">
    <property type="expression patterns" value="baseline and differential"/>
</dbReference>
<dbReference type="GO" id="GO:0034451">
    <property type="term" value="C:centriolar satellite"/>
    <property type="evidence" value="ECO:0000314"/>
    <property type="project" value="HPA"/>
</dbReference>
<dbReference type="GO" id="GO:0120103">
    <property type="term" value="C:centriolar subdistal appendage"/>
    <property type="evidence" value="ECO:0000314"/>
    <property type="project" value="GO_Central"/>
</dbReference>
<dbReference type="GO" id="GO:0005813">
    <property type="term" value="C:centrosome"/>
    <property type="evidence" value="ECO:0000314"/>
    <property type="project" value="HPA"/>
</dbReference>
<dbReference type="GO" id="GO:0036064">
    <property type="term" value="C:ciliary basal body"/>
    <property type="evidence" value="ECO:0000314"/>
    <property type="project" value="HPA"/>
</dbReference>
<dbReference type="GO" id="GO:0005829">
    <property type="term" value="C:cytosol"/>
    <property type="evidence" value="ECO:0000314"/>
    <property type="project" value="HPA"/>
</dbReference>
<dbReference type="GO" id="GO:0090543">
    <property type="term" value="C:Flemming body"/>
    <property type="evidence" value="ECO:0007669"/>
    <property type="project" value="UniProtKB-SubCell"/>
</dbReference>
<dbReference type="GO" id="GO:0005794">
    <property type="term" value="C:Golgi apparatus"/>
    <property type="evidence" value="ECO:0000314"/>
    <property type="project" value="HPA"/>
</dbReference>
<dbReference type="GO" id="GO:0090619">
    <property type="term" value="C:meiotic spindle pole"/>
    <property type="evidence" value="ECO:0007669"/>
    <property type="project" value="Ensembl"/>
</dbReference>
<dbReference type="GO" id="GO:0016020">
    <property type="term" value="C:membrane"/>
    <property type="evidence" value="ECO:0007005"/>
    <property type="project" value="UniProtKB"/>
</dbReference>
<dbReference type="GO" id="GO:0005815">
    <property type="term" value="C:microtubule organizing center"/>
    <property type="evidence" value="ECO:0000318"/>
    <property type="project" value="GO_Central"/>
</dbReference>
<dbReference type="GO" id="GO:0097431">
    <property type="term" value="C:mitotic spindle pole"/>
    <property type="evidence" value="ECO:0007669"/>
    <property type="project" value="Ensembl"/>
</dbReference>
<dbReference type="GO" id="GO:0048471">
    <property type="term" value="C:perinuclear region of cytoplasm"/>
    <property type="evidence" value="ECO:0007669"/>
    <property type="project" value="Ensembl"/>
</dbReference>
<dbReference type="GO" id="GO:0005886">
    <property type="term" value="C:plasma membrane"/>
    <property type="evidence" value="ECO:0000314"/>
    <property type="project" value="HPA"/>
</dbReference>
<dbReference type="GO" id="GO:0035904">
    <property type="term" value="P:aorta development"/>
    <property type="evidence" value="ECO:0007669"/>
    <property type="project" value="Ensembl"/>
</dbReference>
<dbReference type="GO" id="GO:0051301">
    <property type="term" value="P:cell division"/>
    <property type="evidence" value="ECO:0007669"/>
    <property type="project" value="UniProtKB-KW"/>
</dbReference>
<dbReference type="GO" id="GO:0060976">
    <property type="term" value="P:coronary vasculature development"/>
    <property type="evidence" value="ECO:0007669"/>
    <property type="project" value="Ensembl"/>
</dbReference>
<dbReference type="GO" id="GO:0001822">
    <property type="term" value="P:kidney development"/>
    <property type="evidence" value="ECO:0007669"/>
    <property type="project" value="Ensembl"/>
</dbReference>
<dbReference type="GO" id="GO:0003281">
    <property type="term" value="P:ventricular septum development"/>
    <property type="evidence" value="ECO:0007669"/>
    <property type="project" value="Ensembl"/>
</dbReference>
<dbReference type="FunFam" id="3.80.10.10:FF:000153">
    <property type="entry name" value="centriolin isoform X1"/>
    <property type="match status" value="1"/>
</dbReference>
<dbReference type="FunFam" id="3.80.10.10:FF:000139">
    <property type="entry name" value="centriolin isoform X2"/>
    <property type="match status" value="1"/>
</dbReference>
<dbReference type="Gene3D" id="3.80.10.10">
    <property type="entry name" value="Ribonuclease Inhibitor"/>
    <property type="match status" value="2"/>
</dbReference>
<dbReference type="InterPro" id="IPR001611">
    <property type="entry name" value="Leu-rich_rpt"/>
</dbReference>
<dbReference type="InterPro" id="IPR003591">
    <property type="entry name" value="Leu-rich_rpt_typical-subtyp"/>
</dbReference>
<dbReference type="InterPro" id="IPR032675">
    <property type="entry name" value="LRR_dom_sf"/>
</dbReference>
<dbReference type="InterPro" id="IPR050836">
    <property type="entry name" value="SDS22/Internalin_LRR"/>
</dbReference>
<dbReference type="PANTHER" id="PTHR46652">
    <property type="entry name" value="LEUCINE-RICH REPEAT AND IQ DOMAIN-CONTAINING PROTEIN 1-RELATED"/>
    <property type="match status" value="1"/>
</dbReference>
<dbReference type="PANTHER" id="PTHR46652:SF3">
    <property type="entry name" value="LEUCINE-RICH REPEAT-CONTAINING PROTEIN 9"/>
    <property type="match status" value="1"/>
</dbReference>
<dbReference type="Pfam" id="PF14580">
    <property type="entry name" value="LRR_9"/>
    <property type="match status" value="1"/>
</dbReference>
<dbReference type="SMART" id="SM00365">
    <property type="entry name" value="LRR_SD22"/>
    <property type="match status" value="3"/>
</dbReference>
<dbReference type="SMART" id="SM00369">
    <property type="entry name" value="LRR_TYP"/>
    <property type="match status" value="3"/>
</dbReference>
<dbReference type="SUPFAM" id="SSF52058">
    <property type="entry name" value="L domain-like"/>
    <property type="match status" value="1"/>
</dbReference>
<dbReference type="PROSITE" id="PS51450">
    <property type="entry name" value="LRR"/>
    <property type="match status" value="5"/>
</dbReference>
<keyword id="KW-0025">Alternative splicing</keyword>
<keyword id="KW-0131">Cell cycle</keyword>
<keyword id="KW-0132">Cell division</keyword>
<keyword id="KW-0160">Chromosomal rearrangement</keyword>
<keyword id="KW-0175">Coiled coil</keyword>
<keyword id="KW-0963">Cytoplasm</keyword>
<keyword id="KW-0206">Cytoskeleton</keyword>
<keyword id="KW-0433">Leucine-rich repeat</keyword>
<keyword id="KW-0597">Phosphoprotein</keyword>
<keyword id="KW-1267">Proteomics identification</keyword>
<keyword id="KW-1185">Reference proteome</keyword>
<keyword id="KW-0677">Repeat</keyword>
<accession>Q7Z7A1</accession>
<accession>A2A2Y1</accession>
<accession>B2RP67</accession>
<accession>Q3MN79</accession>
<accession>Q5FWF8</accession>
<accession>Q5JVD0</accession>
<accession>Q6MZR3</accession>
<accession>Q6PKC1</accession>
<accession>Q8TEP3</accession>
<accession>Q9Y489</accession>
<evidence type="ECO:0000255" key="1"/>
<evidence type="ECO:0000256" key="2">
    <source>
        <dbReference type="SAM" id="MobiDB-lite"/>
    </source>
</evidence>
<evidence type="ECO:0000269" key="3">
    <source>
    </source>
</evidence>
<evidence type="ECO:0000269" key="4">
    <source>
    </source>
</evidence>
<evidence type="ECO:0000269" key="5">
    <source>
    </source>
</evidence>
<evidence type="ECO:0000269" key="6">
    <source>
    </source>
</evidence>
<evidence type="ECO:0000269" key="7">
    <source>
    </source>
</evidence>
<evidence type="ECO:0000269" key="8">
    <source>
    </source>
</evidence>
<evidence type="ECO:0000303" key="9">
    <source>
    </source>
</evidence>
<evidence type="ECO:0000303" key="10">
    <source>
    </source>
</evidence>
<evidence type="ECO:0000303" key="11">
    <source>
    </source>
</evidence>
<evidence type="ECO:0000303" key="12">
    <source>
    </source>
</evidence>
<evidence type="ECO:0000305" key="13"/>
<evidence type="ECO:0007744" key="14">
    <source>
    </source>
</evidence>
<sequence length="2325" mass="268886">MKKGSQQKIFSKAKIPSSSHSPIPSSMSNMRSRSLSPLIGSETLPFHSGGQWCEQVEIADENNMLLDYQDHKGADSHAGVRYITEALIKKLTKQDNLALIKSLNLSLSKDGGKKFKYIENLEKCVKLEVLNLSYNLIGKIEKLDKLLKLRELNLSYNKISKIEGIENMCNLQKLNLAGNEIEHIPVWLGKKLKSLRVLNLKGNKISSLQDISKLKPLQDLISLILVENPVVTLPHYLQFTIFHLRSLESLEGQPVTTQDRQEAFERFSLEEVERLERDLEKKMIETEELKSKQTRFLEEIKNQDKLNKSLKEEAMLQKQSCEELKSDLNTKNELLKQKTIELTRACQKQYELEQELAFYKIDAKFEPLNYYPSEYAEIDKAPDESPYIGKSRYKRNMFATESYIIDSAQAVQIKKMEPDEQLRNDHMNLRGHTPLDTQLEDKEKKISAAQTRLSELHDEIEKAEQQILRATEEFKQLEEAIQLKKISEAGKDLLYKQLSGRLQLVNKLRQEALDLELQMEKQKQEIAGKQKEIKDLQIAIDSLDSKDPKHSHMKAQKSGKEQQLDIMNKQYQQLESRLDEILSRIAKETEEIKDLEEQLTEGQIAANEALKKDLEGVISGLQEYLGTIKGQATQAQNECRKLRDEKETLLQRLTEVEQERDQLEIVAMDAENMRKELAELESALQEQHEVNASLQQTQGDLSAYEAELEARLNLRDAEANQLKEELEKVTRLTQLEQSALQAELEKERQALKNALGKAQFSEEKEQENSELHAKLKHLQDDNNLLKQQLKDFQNHLNHVVDGLVRPEEVAARVDELRRKLKLGTGEMNIHSPSDVLGKSLADLQKQFSEILARSKWERDEAQVRERKLQEEMALQQEKLATGQEEFRQACERALEARMNFDKRQHEARIQQMENEIHYLQENLKSMEEIQGLTDLQLQEADEEKERILAQLRELEKKKKLEDAKSQEQVFGLDKELKKLKKAVATSDKLATAELTIAKDQLKSLHGTVMKINQERAEELQEAERFSRKAAQAARDLTRAEAEIELLQNLLRQKGEQFRLEMEKTGVGTGANSQVLEIEKLNETMERQRTEIARLQNVLDLTGSDNKGGFENVLEEIAELRREVSYQNDYISSMADPFKRRGYWYFMPPPPSSKVSSHSSQATKDSGVGLKYSASTPVRKPRPGQQDGKEGSQPPPASGYWVYSPIRSGLHKLFPSRDADSGGDSQEESELDDQEEPPFVPPPGYMMYTVLPDGSPVPQGMALYAPPPPLPNNSRPLTPGTVVYGPPPAGAPMVYGPPPPNFSIPFIPMGVLHCNVPEHHNLENEVSRLEDIMQHLKSKKREERWMRASKRQSEKEMEELHHNIDDLLQEKKSLECEVEELHRTVQKRQQQKDFIDGNVESLMTELEIEKSLKHHEDIVDEIECIEKTLLKRRSELREADRLLAEAESELSCTKEKTKNAVEKFTDAKRSLLQTESDAEELERRAQETAVNLVKADQQLRSLQADAKDLEQHKIKQEEILKEINKIVAAKDSDFQCLSKKKEKLTEELQKLQKDIEMAERNEDHHLQVLKESEVLLQAKRAELEKLKSQVTSQQQEMAVLDRQLGHKKEELHLLQGSMVQAKADLQEALRLGETEVTEKCNHIREVKSLLEELSFQKGELNVQISERKTQLTLIKQEIEKEEENLQVVLRQMSKHKTELKNILDMLQLENHELQGLKLQHDQRVSELEKTQVAVLEEKLELENLQQISQQQKGEIEWQKQLLERDKREIERMTAESRALQSCVECLSKEKEDLQEKCDIWEKKLAQTKRVLAAAEENSKMEQSNLEKLELNVRKLQQELDQLNRDKLSLHNDISAMQQQLQEKREAVNSLQEELANVQDHLNLAKQDLLHTTKHQDVLLSEQTRLQKDISEWANRFEDCQKEEETKQQQLQVLQNEIEENKLKLVQQEMMFQRLQKERESEESKLETSKVTLKEQQHQLEKELTDQKSKLDQVLSKVLAAEERVRTLQEEERWCESLEKTLSQTKRQLSEREQQLVEKSGELLALQKEADSMRADFSLLRNQFLTERKKAEKQVASLKEALKIQRSQLEKNLLEQKQENSCIQKEMATIELVAQDNHERARRLMKELNQMQYEYTELKKQMANQKDLERRQMEISDAMRTLKSEVKDEIRTSLKNLNQFLPELPADLEAILERNENLEGELESLKENLPFTMNEGPFEEKLNFSQVHIMDEHWRGEALREKLRHREDRLKAQLRHCMSKQAEVLIKGKRQTEGTLHSLRRQVDALGELVTSTSADSASSPSLSQLESSLTEDSQLGQNQEKNASAR</sequence>
<gene>
    <name type="primary">CNTRL</name>
    <name type="synonym">CEP1</name>
    <name type="synonym">CEP110</name>
</gene>
<proteinExistence type="evidence at protein level"/>
<comment type="function">
    <text evidence="5 7">Involved in cell cycle progression and cytokinesis. During the late steps of cytokinesis, anchors exocyst and SNARE complexes at the midbody, thereby allowing secretory vesicle-mediated abscission.</text>
</comment>
<comment type="subunit">
    <text evidence="7 8">Interacts with HOOK2. Interacts with EXOC6 and SNAPIN. Associates with the exocyst complex.</text>
</comment>
<comment type="subcellular location">
    <subcellularLocation>
        <location evidence="3 4 5 6">Cytoplasm</location>
        <location evidence="3 4 5 6">Cytoskeleton</location>
        <location evidence="3 4 5 6">Microtubule organizing center</location>
        <location evidence="3 4 5 6">Centrosome</location>
    </subcellularLocation>
    <subcellularLocation>
        <location evidence="5 7">Midbody</location>
        <location evidence="5 7">Midbody ring</location>
    </subcellularLocation>
</comment>
<comment type="alternative products">
    <event type="alternative splicing"/>
    <isoform>
        <id>Q7Z7A1-1</id>
        <name>1</name>
        <sequence type="displayed"/>
    </isoform>
    <isoform>
        <id>Q7Z7A1-2</id>
        <name>2</name>
        <sequence type="described" ref="VSP_032048"/>
    </isoform>
    <isoform>
        <id>Q7Z7A1-3</id>
        <name>3</name>
        <sequence type="described" ref="VSP_032047"/>
    </isoform>
    <isoform>
        <id>Q7Z7A1-4</id>
        <name>4</name>
        <sequence type="described" ref="VSP_032046 VSP_032050"/>
    </isoform>
    <isoform>
        <id>Q7Z7A1-5</id>
        <name>5</name>
        <sequence type="described" ref="VSP_032049"/>
    </isoform>
</comment>
<comment type="tissue specificity">
    <text evidence="3">Widely expressed with highest levels in testis and trachea.</text>
</comment>
<comment type="disease">
    <text>A chromosomal aberration involving CEP110 may be a cause of stem cell myeloproliferative disorder (MPD). Translocation t(8;9)(p12;q33) with FGFR1. MPD is characterized by myeloid hyperplasia, eosinophilia and T-cell or B-cell lymphoblastic lymphoma. In general it progresses to acute myeloid leukemia. The fusion protein CEP110-FGFR1 is found in the cytoplasm, exhibits constitutive kinase activity and may be responsible for the transforming activity.</text>
</comment>
<comment type="sequence caution" evidence="13">
    <conflict type="erroneous initiation">
        <sequence resource="EMBL-CDS" id="AAH02932"/>
    </conflict>
    <text>Truncated N-terminus.</text>
</comment>
<comment type="sequence caution" evidence="13">
    <conflict type="miscellaneous discrepancy">
        <sequence resource="EMBL-CDS" id="AAH02932"/>
    </conflict>
    <text>Contaminating sequence. Potential poly-A sequence.</text>
</comment>
<comment type="sequence caution" evidence="13">
    <conflict type="miscellaneous discrepancy">
        <sequence resource="EMBL-CDS" id="AAH89415"/>
    </conflict>
    <text>Contaminating sequence. Potential poly-A sequence.</text>
</comment>